<feature type="propeptide" id="PRO_0000432461" evidence="1">
    <location>
        <begin position="1"/>
        <end position="24"/>
    </location>
</feature>
<feature type="chain" id="PRO_0000029532" description="Photosystem II reaction center protein K" evidence="1">
    <location>
        <begin position="25"/>
        <end position="61"/>
    </location>
</feature>
<feature type="transmembrane region" description="Helical" evidence="1">
    <location>
        <begin position="36"/>
        <end position="56"/>
    </location>
</feature>
<evidence type="ECO:0000255" key="1">
    <source>
        <dbReference type="HAMAP-Rule" id="MF_00441"/>
    </source>
</evidence>
<protein>
    <recommendedName>
        <fullName evidence="1">Photosystem II reaction center protein K</fullName>
        <shortName evidence="1">PSII-K</shortName>
    </recommendedName>
</protein>
<comment type="function">
    <text evidence="1">One of the components of the core complex of photosystem II (PSII). PSII is a light-driven water:plastoquinone oxidoreductase that uses light energy to abstract electrons from H(2)O, generating O(2) and a proton gradient subsequently used for ATP formation. It consists of a core antenna complex that captures photons, and an electron transfer chain that converts photonic excitation into a charge separation.</text>
</comment>
<comment type="subunit">
    <text evidence="1">PSII is composed of 1 copy each of membrane proteins PsbA, PsbB, PsbC, PsbD, PsbE, PsbF, PsbH, PsbI, PsbJ, PsbK, PsbL, PsbM, PsbT, PsbX, PsbY, PsbZ, Psb30/Ycf12, at least 3 peripheral proteins of the oxygen-evolving complex and a large number of cofactors. It forms dimeric complexes.</text>
</comment>
<comment type="subcellular location">
    <subcellularLocation>
        <location evidence="1">Plastid</location>
        <location evidence="1">Chloroplast thylakoid membrane</location>
        <topology evidence="1">Single-pass membrane protein</topology>
    </subcellularLocation>
</comment>
<comment type="similarity">
    <text evidence="1">Belongs to the PsbK family.</text>
</comment>
<proteinExistence type="inferred from homology"/>
<keyword id="KW-0150">Chloroplast</keyword>
<keyword id="KW-0472">Membrane</keyword>
<keyword id="KW-0602">Photosynthesis</keyword>
<keyword id="KW-0604">Photosystem II</keyword>
<keyword id="KW-0934">Plastid</keyword>
<keyword id="KW-0674">Reaction center</keyword>
<keyword id="KW-1185">Reference proteome</keyword>
<keyword id="KW-0793">Thylakoid</keyword>
<keyword id="KW-0812">Transmembrane</keyword>
<keyword id="KW-1133">Transmembrane helix</keyword>
<name>PSBK_TOBAC</name>
<sequence length="61" mass="6914">MLNTFSLIGICLNSTLFSSSFFFGKLPEAYAFLNPIVDIMPVIPLFFFLLAFVWQAAVSFR</sequence>
<gene>
    <name evidence="1" type="primary">psbK</name>
</gene>
<organism>
    <name type="scientific">Nicotiana tabacum</name>
    <name type="common">Common tobacco</name>
    <dbReference type="NCBI Taxonomy" id="4097"/>
    <lineage>
        <taxon>Eukaryota</taxon>
        <taxon>Viridiplantae</taxon>
        <taxon>Streptophyta</taxon>
        <taxon>Embryophyta</taxon>
        <taxon>Tracheophyta</taxon>
        <taxon>Spermatophyta</taxon>
        <taxon>Magnoliopsida</taxon>
        <taxon>eudicotyledons</taxon>
        <taxon>Gunneridae</taxon>
        <taxon>Pentapetalae</taxon>
        <taxon>asterids</taxon>
        <taxon>lamiids</taxon>
        <taxon>Solanales</taxon>
        <taxon>Solanaceae</taxon>
        <taxon>Nicotianoideae</taxon>
        <taxon>Nicotianeae</taxon>
        <taxon>Nicotiana</taxon>
    </lineage>
</organism>
<accession>P12164</accession>
<accession>P22668</accession>
<dbReference type="EMBL" id="Z00044">
    <property type="protein sequence ID" value="CAA77439.1"/>
    <property type="molecule type" value="Genomic_DNA"/>
</dbReference>
<dbReference type="PIR" id="A05064">
    <property type="entry name" value="F2NTK"/>
</dbReference>
<dbReference type="RefSeq" id="NP_054480.1">
    <property type="nucleotide sequence ID" value="NC_001879.2"/>
</dbReference>
<dbReference type="SMR" id="P12164"/>
<dbReference type="GeneID" id="1466293"/>
<dbReference type="KEGG" id="nta:1466293"/>
<dbReference type="OMA" id="PIIDVMP"/>
<dbReference type="OrthoDB" id="1673137at2759"/>
<dbReference type="Proteomes" id="UP000084051">
    <property type="component" value="Unplaced"/>
</dbReference>
<dbReference type="GO" id="GO:0009535">
    <property type="term" value="C:chloroplast thylakoid membrane"/>
    <property type="evidence" value="ECO:0007669"/>
    <property type="project" value="UniProtKB-SubCell"/>
</dbReference>
<dbReference type="GO" id="GO:0009539">
    <property type="term" value="C:photosystem II reaction center"/>
    <property type="evidence" value="ECO:0007669"/>
    <property type="project" value="InterPro"/>
</dbReference>
<dbReference type="GO" id="GO:0015979">
    <property type="term" value="P:photosynthesis"/>
    <property type="evidence" value="ECO:0007669"/>
    <property type="project" value="UniProtKB-UniRule"/>
</dbReference>
<dbReference type="HAMAP" id="MF_00441">
    <property type="entry name" value="PSII_PsbK"/>
    <property type="match status" value="1"/>
</dbReference>
<dbReference type="InterPro" id="IPR003687">
    <property type="entry name" value="PSII_PsbK"/>
</dbReference>
<dbReference type="InterPro" id="IPR037270">
    <property type="entry name" value="PSII_PsbK_sf"/>
</dbReference>
<dbReference type="NCBIfam" id="NF002715">
    <property type="entry name" value="PRK02553.1"/>
    <property type="match status" value="1"/>
</dbReference>
<dbReference type="PANTHER" id="PTHR35325">
    <property type="match status" value="1"/>
</dbReference>
<dbReference type="PANTHER" id="PTHR35325:SF1">
    <property type="entry name" value="PHOTOSYSTEM II REACTION CENTER PROTEIN K"/>
    <property type="match status" value="1"/>
</dbReference>
<dbReference type="Pfam" id="PF02533">
    <property type="entry name" value="PsbK"/>
    <property type="match status" value="1"/>
</dbReference>
<dbReference type="SUPFAM" id="SSF161037">
    <property type="entry name" value="Photosystem II reaction center protein K, PsbK"/>
    <property type="match status" value="1"/>
</dbReference>
<reference key="1">
    <citation type="journal article" date="1986" name="EMBO J.">
        <title>The complete nucleotide sequence of the tobacco chloroplast genome: its gene organization and expression.</title>
        <authorList>
            <person name="Shinozaki K."/>
            <person name="Ohme M."/>
            <person name="Tanaka M."/>
            <person name="Wakasugi T."/>
            <person name="Hayashida N."/>
            <person name="Matsubayashi T."/>
            <person name="Zaita N."/>
            <person name="Chunwongse J."/>
            <person name="Obokata J."/>
            <person name="Yamaguchi-Shinozaki K."/>
            <person name="Ohto C."/>
            <person name="Torazawa K."/>
            <person name="Meng B.-Y."/>
            <person name="Sugita M."/>
            <person name="Deno H."/>
            <person name="Kamogashira T."/>
            <person name="Yamada K."/>
            <person name="Kusuda J."/>
            <person name="Takaiwa F."/>
            <person name="Kato A."/>
            <person name="Tohdoh N."/>
            <person name="Shimada H."/>
            <person name="Sugiura M."/>
        </authorList>
    </citation>
    <scope>NUCLEOTIDE SEQUENCE [LARGE SCALE GENOMIC DNA]</scope>
    <source>
        <strain>cv. Bright Yellow 4</strain>
    </source>
</reference>
<reference key="2">
    <citation type="journal article" date="1991" name="Curr. Genet.">
        <title>Two promoters within the psbK-psbI-trnG gene cluster in tobacco chloroplast DNA.</title>
        <authorList>
            <person name="Meng B.Y."/>
            <person name="Wakasugi T."/>
            <person name="Sugiura M."/>
        </authorList>
    </citation>
    <scope>NUCLEOTIDE SEQUENCE [GENOMIC DNA]</scope>
    <source>
        <strain>cv. Bright Yellow 4</strain>
    </source>
</reference>
<geneLocation type="chloroplast"/>